<accession>Q8WN18</accession>
<comment type="function">
    <text evidence="1">Promotes spermatogenesis and ovulation by stimulating the testes and ovaries to synthesize steroids.</text>
</comment>
<comment type="subunit">
    <text evidence="1">Heterodimer of a common alpha chain and a unique beta chain which confers biological specificity to thyrotropin, lutropin, follitropin and gonadotropin.</text>
</comment>
<comment type="subcellular location">
    <subcellularLocation>
        <location>Secreted</location>
    </subcellularLocation>
</comment>
<comment type="similarity">
    <text evidence="3">Belongs to the glycoprotein hormones subunit beta family.</text>
</comment>
<feature type="signal peptide" evidence="1">
    <location>
        <begin position="1"/>
        <end position="20"/>
    </location>
</feature>
<feature type="chain" id="PRO_0000042865" description="Lutropin subunit beta">
    <location>
        <begin position="21"/>
        <end position="141"/>
    </location>
</feature>
<feature type="glycosylation site" description="N-linked (GlcNAc...) asparagine" evidence="2">
    <location>
        <position position="33"/>
    </location>
</feature>
<feature type="disulfide bond" evidence="1">
    <location>
        <begin position="29"/>
        <end position="77"/>
    </location>
</feature>
<feature type="disulfide bond" evidence="1">
    <location>
        <begin position="43"/>
        <end position="92"/>
    </location>
</feature>
<feature type="disulfide bond" evidence="1">
    <location>
        <begin position="46"/>
        <end position="130"/>
    </location>
</feature>
<feature type="disulfide bond" evidence="1">
    <location>
        <begin position="54"/>
        <end position="108"/>
    </location>
</feature>
<feature type="disulfide bond" evidence="1">
    <location>
        <begin position="58"/>
        <end position="110"/>
    </location>
</feature>
<feature type="disulfide bond" evidence="1">
    <location>
        <begin position="113"/>
        <end position="120"/>
    </location>
</feature>
<sequence length="141" mass="15034">MEMFQGLLLWLLLNTGGAWASRGPLRPLCRPINATLAAENEACPVCITFTTTICAGYCPSMVRVLPAALPPVPQPVCTYHELRFASIRLPGCPPGVDPMVSFPVALSCRCGPCRLSNSDCGGPRAQPLACDRPPLPGLLFL</sequence>
<organism>
    <name type="scientific">Ailuropoda melanoleuca</name>
    <name type="common">Giant panda</name>
    <dbReference type="NCBI Taxonomy" id="9646"/>
    <lineage>
        <taxon>Eukaryota</taxon>
        <taxon>Metazoa</taxon>
        <taxon>Chordata</taxon>
        <taxon>Craniata</taxon>
        <taxon>Vertebrata</taxon>
        <taxon>Euteleostomi</taxon>
        <taxon>Mammalia</taxon>
        <taxon>Eutheria</taxon>
        <taxon>Laurasiatheria</taxon>
        <taxon>Carnivora</taxon>
        <taxon>Caniformia</taxon>
        <taxon>Ursidae</taxon>
        <taxon>Ailuropoda</taxon>
    </lineage>
</organism>
<protein>
    <recommendedName>
        <fullName>Lutropin subunit beta</fullName>
    </recommendedName>
    <alternativeName>
        <fullName>Luteinizing hormone subunit beta</fullName>
        <shortName>LH-B</shortName>
        <shortName>LSH-B</shortName>
        <shortName>LSH-beta</shortName>
    </alternativeName>
    <alternativeName>
        <fullName>Lutropin beta chain</fullName>
    </alternativeName>
</protein>
<name>LSHB_AILME</name>
<dbReference type="EMBL" id="AF448455">
    <property type="protein sequence ID" value="AAL41022.1"/>
    <property type="molecule type" value="mRNA"/>
</dbReference>
<dbReference type="RefSeq" id="NP_001291788.1">
    <property type="nucleotide sequence ID" value="NM_001304859.1"/>
</dbReference>
<dbReference type="SMR" id="Q8WN18"/>
<dbReference type="FunCoup" id="Q8WN18">
    <property type="interactions" value="3"/>
</dbReference>
<dbReference type="STRING" id="9646.ENSAMEP00000015279"/>
<dbReference type="GlyCosmos" id="Q8WN18">
    <property type="glycosylation" value="1 site, No reported glycans"/>
</dbReference>
<dbReference type="GeneID" id="100475711"/>
<dbReference type="KEGG" id="aml:100475711"/>
<dbReference type="CTD" id="3972"/>
<dbReference type="eggNOG" id="ENOG502S49V">
    <property type="taxonomic scope" value="Eukaryota"/>
</dbReference>
<dbReference type="InParanoid" id="Q8WN18"/>
<dbReference type="OrthoDB" id="8453657at2759"/>
<dbReference type="Proteomes" id="UP000008912">
    <property type="component" value="Unassembled WGS sequence"/>
</dbReference>
<dbReference type="GO" id="GO:0005737">
    <property type="term" value="C:cytoplasm"/>
    <property type="evidence" value="ECO:0007669"/>
    <property type="project" value="TreeGrafter"/>
</dbReference>
<dbReference type="GO" id="GO:0005615">
    <property type="term" value="C:extracellular space"/>
    <property type="evidence" value="ECO:0007669"/>
    <property type="project" value="TreeGrafter"/>
</dbReference>
<dbReference type="GO" id="GO:0005179">
    <property type="term" value="F:hormone activity"/>
    <property type="evidence" value="ECO:0007669"/>
    <property type="project" value="UniProtKB-KW"/>
</dbReference>
<dbReference type="GO" id="GO:0007186">
    <property type="term" value="P:G protein-coupled receptor signaling pathway"/>
    <property type="evidence" value="ECO:0007669"/>
    <property type="project" value="TreeGrafter"/>
</dbReference>
<dbReference type="CDD" id="cd00069">
    <property type="entry name" value="GHB_like"/>
    <property type="match status" value="1"/>
</dbReference>
<dbReference type="FunFam" id="2.10.90.10:FF:000007">
    <property type="entry name" value="Luteinizing hormone beta subunit"/>
    <property type="match status" value="1"/>
</dbReference>
<dbReference type="Gene3D" id="2.10.90.10">
    <property type="entry name" value="Cystine-knot cytokines"/>
    <property type="match status" value="1"/>
</dbReference>
<dbReference type="InterPro" id="IPR029034">
    <property type="entry name" value="Cystine-knot_cytokine"/>
</dbReference>
<dbReference type="InterPro" id="IPR006208">
    <property type="entry name" value="Glyco_hormone_CN"/>
</dbReference>
<dbReference type="InterPro" id="IPR001545">
    <property type="entry name" value="Gonadotropin_bsu"/>
</dbReference>
<dbReference type="InterPro" id="IPR018245">
    <property type="entry name" value="Gonadotropin_bsu_CS"/>
</dbReference>
<dbReference type="PANTHER" id="PTHR11515">
    <property type="entry name" value="GLYCOPROTEIN HORMONE BETA CHAIN"/>
    <property type="match status" value="1"/>
</dbReference>
<dbReference type="PANTHER" id="PTHR11515:SF11">
    <property type="entry name" value="LUTROPIN SUBUNIT BETA"/>
    <property type="match status" value="1"/>
</dbReference>
<dbReference type="Pfam" id="PF00007">
    <property type="entry name" value="Cys_knot"/>
    <property type="match status" value="1"/>
</dbReference>
<dbReference type="SMART" id="SM00068">
    <property type="entry name" value="GHB"/>
    <property type="match status" value="1"/>
</dbReference>
<dbReference type="SUPFAM" id="SSF57501">
    <property type="entry name" value="Cystine-knot cytokines"/>
    <property type="match status" value="1"/>
</dbReference>
<dbReference type="PROSITE" id="PS00261">
    <property type="entry name" value="GLYCO_HORMONE_BETA_1"/>
    <property type="match status" value="1"/>
</dbReference>
<dbReference type="PROSITE" id="PS00689">
    <property type="entry name" value="GLYCO_HORMONE_BETA_2"/>
    <property type="match status" value="1"/>
</dbReference>
<evidence type="ECO:0000250" key="1"/>
<evidence type="ECO:0000255" key="2"/>
<evidence type="ECO:0000305" key="3"/>
<keyword id="KW-1015">Disulfide bond</keyword>
<keyword id="KW-0325">Glycoprotein</keyword>
<keyword id="KW-0372">Hormone</keyword>
<keyword id="KW-1185">Reference proteome</keyword>
<keyword id="KW-0964">Secreted</keyword>
<keyword id="KW-0732">Signal</keyword>
<reference key="1">
    <citation type="journal article" date="2003" name="Anim. Reprod. Sci.">
        <title>Cloning and sequence analysis of FSH and LH in the giant panda (Ailuropoda melanoleuca).</title>
        <authorList>
            <person name="Liao M.J."/>
            <person name="Zhu M.Y."/>
            <person name="Zhang Z.H."/>
            <person name="Zhang A.J."/>
            <person name="Li G.H."/>
            <person name="Sheng F.J."/>
        </authorList>
    </citation>
    <scope>NUCLEOTIDE SEQUENCE [MRNA]</scope>
    <source>
        <tissue>Pituitary</tissue>
    </source>
</reference>
<gene>
    <name type="primary">LHB</name>
</gene>
<proteinExistence type="evidence at transcript level"/>